<sequence length="290" mass="32824">MNFVIATRRSKLAQVQTEIIIDLLNKKHDIECEKLLIETVGDKILEVSLDKIGGKGLFVKDIEVAMLEQRADAAVHSMKDVPYEMPKGFEIIAIPEREDVRDAFISLDNIKFKDLRKGAKIGTSSRRRAAQLKLLRPDLDIVPIRGNVQTRIEKIKKENLDGVILAVAGLKRVNLDHLITDYFDTKEMVPAIGQGALGIEVMEEHPKKELFKDLDHYNSKICVLAERAFMRELDGDCHSTIGAYASIKDNIMHIIGIFERKNKIIKKEITGTKDQYEKLGISLAEHILKD</sequence>
<dbReference type="EC" id="2.5.1.61" evidence="1"/>
<dbReference type="EMBL" id="CP000727">
    <property type="protein sequence ID" value="ABS37527.1"/>
    <property type="molecule type" value="Genomic_DNA"/>
</dbReference>
<dbReference type="EMBL" id="AM412317">
    <property type="protein sequence ID" value="CAL82473.1"/>
    <property type="molecule type" value="Genomic_DNA"/>
</dbReference>
<dbReference type="RefSeq" id="WP_011948607.1">
    <property type="nucleotide sequence ID" value="NC_009698.1"/>
</dbReference>
<dbReference type="RefSeq" id="YP_001253453.1">
    <property type="nucleotide sequence ID" value="NC_009495.1"/>
</dbReference>
<dbReference type="RefSeq" id="YP_001386843.1">
    <property type="nucleotide sequence ID" value="NC_009698.1"/>
</dbReference>
<dbReference type="SMR" id="A5I0B2"/>
<dbReference type="GeneID" id="5185175"/>
<dbReference type="KEGG" id="cbh:CLC_0975"/>
<dbReference type="KEGG" id="cbo:CBO0920"/>
<dbReference type="PATRIC" id="fig|413999.7.peg.917"/>
<dbReference type="HOGENOM" id="CLU_019704_0_2_9"/>
<dbReference type="UniPathway" id="UPA00251">
    <property type="reaction ID" value="UER00319"/>
</dbReference>
<dbReference type="PRO" id="PR:A5I0B2"/>
<dbReference type="Proteomes" id="UP000001986">
    <property type="component" value="Chromosome"/>
</dbReference>
<dbReference type="GO" id="GO:0005737">
    <property type="term" value="C:cytoplasm"/>
    <property type="evidence" value="ECO:0000318"/>
    <property type="project" value="GO_Central"/>
</dbReference>
<dbReference type="GO" id="GO:0004418">
    <property type="term" value="F:hydroxymethylbilane synthase activity"/>
    <property type="evidence" value="ECO:0000318"/>
    <property type="project" value="GO_Central"/>
</dbReference>
<dbReference type="GO" id="GO:0006783">
    <property type="term" value="P:heme biosynthetic process"/>
    <property type="evidence" value="ECO:0000318"/>
    <property type="project" value="GO_Central"/>
</dbReference>
<dbReference type="GO" id="GO:0006782">
    <property type="term" value="P:protoporphyrinogen IX biosynthetic process"/>
    <property type="evidence" value="ECO:0007669"/>
    <property type="project" value="UniProtKB-UniRule"/>
</dbReference>
<dbReference type="FunFam" id="3.40.190.10:FF:000005">
    <property type="entry name" value="Porphobilinogen deaminase"/>
    <property type="match status" value="1"/>
</dbReference>
<dbReference type="Gene3D" id="3.40.190.10">
    <property type="entry name" value="Periplasmic binding protein-like II"/>
    <property type="match status" value="2"/>
</dbReference>
<dbReference type="Gene3D" id="3.30.160.40">
    <property type="entry name" value="Porphobilinogen deaminase, C-terminal domain"/>
    <property type="match status" value="1"/>
</dbReference>
<dbReference type="HAMAP" id="MF_00260">
    <property type="entry name" value="Porphobil_deam"/>
    <property type="match status" value="1"/>
</dbReference>
<dbReference type="InterPro" id="IPR000860">
    <property type="entry name" value="HemC"/>
</dbReference>
<dbReference type="InterPro" id="IPR022417">
    <property type="entry name" value="Porphobilin_deaminase_N"/>
</dbReference>
<dbReference type="InterPro" id="IPR022418">
    <property type="entry name" value="Porphobilinogen_deaminase_C"/>
</dbReference>
<dbReference type="InterPro" id="IPR036803">
    <property type="entry name" value="Porphobilinogen_deaminase_C_sf"/>
</dbReference>
<dbReference type="NCBIfam" id="TIGR00212">
    <property type="entry name" value="hemC"/>
    <property type="match status" value="1"/>
</dbReference>
<dbReference type="PANTHER" id="PTHR11557">
    <property type="entry name" value="PORPHOBILINOGEN DEAMINASE"/>
    <property type="match status" value="1"/>
</dbReference>
<dbReference type="PANTHER" id="PTHR11557:SF0">
    <property type="entry name" value="PORPHOBILINOGEN DEAMINASE"/>
    <property type="match status" value="1"/>
</dbReference>
<dbReference type="Pfam" id="PF01379">
    <property type="entry name" value="Porphobil_deam"/>
    <property type="match status" value="1"/>
</dbReference>
<dbReference type="Pfam" id="PF03900">
    <property type="entry name" value="Porphobil_deamC"/>
    <property type="match status" value="1"/>
</dbReference>
<dbReference type="PIRSF" id="PIRSF001438">
    <property type="entry name" value="4pyrrol_synth_OHMeBilane_synth"/>
    <property type="match status" value="1"/>
</dbReference>
<dbReference type="PRINTS" id="PR00151">
    <property type="entry name" value="PORPHBDMNASE"/>
</dbReference>
<dbReference type="SUPFAM" id="SSF53850">
    <property type="entry name" value="Periplasmic binding protein-like II"/>
    <property type="match status" value="1"/>
</dbReference>
<dbReference type="SUPFAM" id="SSF54782">
    <property type="entry name" value="Porphobilinogen deaminase (hydroxymethylbilane synthase), C-terminal domain"/>
    <property type="match status" value="1"/>
</dbReference>
<name>HEM3_CLOBH</name>
<accession>A5I0B2</accession>
<accession>A7G244</accession>
<organism>
    <name type="scientific">Clostridium botulinum (strain Hall / ATCC 3502 / NCTC 13319 / Type A)</name>
    <dbReference type="NCBI Taxonomy" id="441771"/>
    <lineage>
        <taxon>Bacteria</taxon>
        <taxon>Bacillati</taxon>
        <taxon>Bacillota</taxon>
        <taxon>Clostridia</taxon>
        <taxon>Eubacteriales</taxon>
        <taxon>Clostridiaceae</taxon>
        <taxon>Clostridium</taxon>
    </lineage>
</organism>
<proteinExistence type="inferred from homology"/>
<comment type="function">
    <text evidence="1">Tetrapolymerization of the monopyrrole PBG into the hydroxymethylbilane pre-uroporphyrinogen in several discrete steps.</text>
</comment>
<comment type="catalytic activity">
    <reaction evidence="1">
        <text>4 porphobilinogen + H2O = hydroxymethylbilane + 4 NH4(+)</text>
        <dbReference type="Rhea" id="RHEA:13185"/>
        <dbReference type="ChEBI" id="CHEBI:15377"/>
        <dbReference type="ChEBI" id="CHEBI:28938"/>
        <dbReference type="ChEBI" id="CHEBI:57845"/>
        <dbReference type="ChEBI" id="CHEBI:58126"/>
        <dbReference type="EC" id="2.5.1.61"/>
    </reaction>
</comment>
<comment type="cofactor">
    <cofactor evidence="1">
        <name>dipyrromethane</name>
        <dbReference type="ChEBI" id="CHEBI:60342"/>
    </cofactor>
    <text evidence="1">Binds 1 dipyrromethane group covalently.</text>
</comment>
<comment type="pathway">
    <text evidence="1">Porphyrin-containing compound metabolism; protoporphyrin-IX biosynthesis; coproporphyrinogen-III from 5-aminolevulinate: step 2/4.</text>
</comment>
<comment type="subunit">
    <text evidence="1">Monomer.</text>
</comment>
<comment type="miscellaneous">
    <text evidence="1">The porphobilinogen subunits are added to the dipyrromethane group.</text>
</comment>
<comment type="similarity">
    <text evidence="1">Belongs to the HMBS family.</text>
</comment>
<feature type="chain" id="PRO_1000047745" description="Porphobilinogen deaminase">
    <location>
        <begin position="1"/>
        <end position="290"/>
    </location>
</feature>
<feature type="modified residue" description="S-(dipyrrolylmethanemethyl)cysteine" evidence="1">
    <location>
        <position position="237"/>
    </location>
</feature>
<reference key="1">
    <citation type="journal article" date="2007" name="Genome Res.">
        <title>Genome sequence of a proteolytic (Group I) Clostridium botulinum strain Hall A and comparative analysis of the clostridial genomes.</title>
        <authorList>
            <person name="Sebaihia M."/>
            <person name="Peck M.W."/>
            <person name="Minton N.P."/>
            <person name="Thomson N.R."/>
            <person name="Holden M.T.G."/>
            <person name="Mitchell W.J."/>
            <person name="Carter A.T."/>
            <person name="Bentley S.D."/>
            <person name="Mason D.R."/>
            <person name="Crossman L."/>
            <person name="Paul C.J."/>
            <person name="Ivens A."/>
            <person name="Wells-Bennik M.H.J."/>
            <person name="Davis I.J."/>
            <person name="Cerdeno-Tarraga A.M."/>
            <person name="Churcher C."/>
            <person name="Quail M.A."/>
            <person name="Chillingworth T."/>
            <person name="Feltwell T."/>
            <person name="Fraser A."/>
            <person name="Goodhead I."/>
            <person name="Hance Z."/>
            <person name="Jagels K."/>
            <person name="Larke N."/>
            <person name="Maddison M."/>
            <person name="Moule S."/>
            <person name="Mungall K."/>
            <person name="Norbertczak H."/>
            <person name="Rabbinowitsch E."/>
            <person name="Sanders M."/>
            <person name="Simmonds M."/>
            <person name="White B."/>
            <person name="Whithead S."/>
            <person name="Parkhill J."/>
        </authorList>
    </citation>
    <scope>NUCLEOTIDE SEQUENCE [LARGE SCALE GENOMIC DNA]</scope>
    <source>
        <strain>Hall / ATCC 3502 / NCTC 13319 / Type A</strain>
    </source>
</reference>
<reference key="2">
    <citation type="journal article" date="2007" name="PLoS ONE">
        <title>Analysis of the neurotoxin complex genes in Clostridium botulinum A1-A4 and B1 strains: BoNT/A3, /Ba4 and /B1 clusters are located within plasmids.</title>
        <authorList>
            <person name="Smith T.J."/>
            <person name="Hill K.K."/>
            <person name="Foley B.T."/>
            <person name="Detter J.C."/>
            <person name="Munk A.C."/>
            <person name="Bruce D.C."/>
            <person name="Doggett N.A."/>
            <person name="Smith L.A."/>
            <person name="Marks J.D."/>
            <person name="Xie G."/>
            <person name="Brettin T.S."/>
        </authorList>
    </citation>
    <scope>NUCLEOTIDE SEQUENCE [LARGE SCALE GENOMIC DNA]</scope>
    <source>
        <strain>Hall / ATCC 3502 / NCTC 13319 / Type A</strain>
    </source>
</reference>
<evidence type="ECO:0000255" key="1">
    <source>
        <dbReference type="HAMAP-Rule" id="MF_00260"/>
    </source>
</evidence>
<gene>
    <name evidence="1" type="primary">hemC</name>
    <name type="ordered locus">CBO0920</name>
    <name type="ordered locus">CLC_0975</name>
</gene>
<keyword id="KW-0627">Porphyrin biosynthesis</keyword>
<keyword id="KW-1185">Reference proteome</keyword>
<keyword id="KW-0808">Transferase</keyword>
<protein>
    <recommendedName>
        <fullName evidence="1">Porphobilinogen deaminase</fullName>
        <shortName evidence="1">PBG</shortName>
        <ecNumber evidence="1">2.5.1.61</ecNumber>
    </recommendedName>
    <alternativeName>
        <fullName evidence="1">Hydroxymethylbilane synthase</fullName>
        <shortName evidence="1">HMBS</shortName>
    </alternativeName>
    <alternativeName>
        <fullName evidence="1">Pre-uroporphyrinogen synthase</fullName>
    </alternativeName>
</protein>